<reference key="1">
    <citation type="journal article" date="2006" name="Genome Res.">
        <title>Skewed genomic variability in strains of the toxigenic bacterial pathogen, Clostridium perfringens.</title>
        <authorList>
            <person name="Myers G.S.A."/>
            <person name="Rasko D.A."/>
            <person name="Cheung J.K."/>
            <person name="Ravel J."/>
            <person name="Seshadri R."/>
            <person name="DeBoy R.T."/>
            <person name="Ren Q."/>
            <person name="Varga J."/>
            <person name="Awad M.M."/>
            <person name="Brinkac L.M."/>
            <person name="Daugherty S.C."/>
            <person name="Haft D.H."/>
            <person name="Dodson R.J."/>
            <person name="Madupu R."/>
            <person name="Nelson W.C."/>
            <person name="Rosovitz M.J."/>
            <person name="Sullivan S.A."/>
            <person name="Khouri H."/>
            <person name="Dimitrov G.I."/>
            <person name="Watkins K.L."/>
            <person name="Mulligan S."/>
            <person name="Benton J."/>
            <person name="Radune D."/>
            <person name="Fisher D.J."/>
            <person name="Atkins H.S."/>
            <person name="Hiscox T."/>
            <person name="Jost B.H."/>
            <person name="Billington S.J."/>
            <person name="Songer J.G."/>
            <person name="McClane B.A."/>
            <person name="Titball R.W."/>
            <person name="Rood J.I."/>
            <person name="Melville S.B."/>
            <person name="Paulsen I.T."/>
        </authorList>
    </citation>
    <scope>NUCLEOTIDE SEQUENCE [LARGE SCALE GENOMIC DNA]</scope>
    <source>
        <strain>SM101 / Type A</strain>
    </source>
</reference>
<sequence>MDAQLNNLWEQALNIIKGEISEISFNTWIKSCTPISISDNILKLSVPNEFTKGILDTRYKDLLIQALKIVTSRKFKIEFYLESDLEEEKENEEKQKEEKKDNTNDVDGSIVVSDEMSATLNPKYTFQSFVIGNSNRFAHAASLAVAESPAKAYNPLFIYGGVGLGKTHLMHAIGHYILQENPKAKVVYVSSEKFTNELINAIKDDKNEEFRNKYRKVDVLLIDDIQFIAGKERTQEEFFHTFNALHEENKQIILSSDRPPKEIPTLEDRLRSRFEWGLIADIQPPDFETRMAILKKKADVEGLSVPNEVMVYIATKIKSNIRELEGALIRIIAYSSLTNRDVSVDLASEALKDIISNKESAPVTVKTIQESVANYYNLRIEDLKSQRRTRNIAYPRQIAMYLSRKLTDMSLPKIGEEFGGRDHTTVIHAYEKISENLKTDEGLQSMINDITKKLTQK</sequence>
<keyword id="KW-0067">ATP-binding</keyword>
<keyword id="KW-0963">Cytoplasm</keyword>
<keyword id="KW-0235">DNA replication</keyword>
<keyword id="KW-0238">DNA-binding</keyword>
<keyword id="KW-0446">Lipid-binding</keyword>
<keyword id="KW-0547">Nucleotide-binding</keyword>
<dbReference type="EMBL" id="CP000312">
    <property type="protein sequence ID" value="ABG87257.1"/>
    <property type="molecule type" value="Genomic_DNA"/>
</dbReference>
<dbReference type="RefSeq" id="WP_011591196.1">
    <property type="nucleotide sequence ID" value="NC_008262.1"/>
</dbReference>
<dbReference type="SMR" id="Q0SWX6"/>
<dbReference type="KEGG" id="cpr:CPR_0001"/>
<dbReference type="Proteomes" id="UP000001824">
    <property type="component" value="Chromosome"/>
</dbReference>
<dbReference type="GO" id="GO:0005737">
    <property type="term" value="C:cytoplasm"/>
    <property type="evidence" value="ECO:0007669"/>
    <property type="project" value="UniProtKB-SubCell"/>
</dbReference>
<dbReference type="GO" id="GO:0005886">
    <property type="term" value="C:plasma membrane"/>
    <property type="evidence" value="ECO:0007669"/>
    <property type="project" value="TreeGrafter"/>
</dbReference>
<dbReference type="GO" id="GO:0005524">
    <property type="term" value="F:ATP binding"/>
    <property type="evidence" value="ECO:0007669"/>
    <property type="project" value="UniProtKB-UniRule"/>
</dbReference>
<dbReference type="GO" id="GO:0016887">
    <property type="term" value="F:ATP hydrolysis activity"/>
    <property type="evidence" value="ECO:0007669"/>
    <property type="project" value="InterPro"/>
</dbReference>
<dbReference type="GO" id="GO:0003688">
    <property type="term" value="F:DNA replication origin binding"/>
    <property type="evidence" value="ECO:0007669"/>
    <property type="project" value="UniProtKB-UniRule"/>
</dbReference>
<dbReference type="GO" id="GO:0008289">
    <property type="term" value="F:lipid binding"/>
    <property type="evidence" value="ECO:0007669"/>
    <property type="project" value="UniProtKB-KW"/>
</dbReference>
<dbReference type="GO" id="GO:0006270">
    <property type="term" value="P:DNA replication initiation"/>
    <property type="evidence" value="ECO:0007669"/>
    <property type="project" value="UniProtKB-UniRule"/>
</dbReference>
<dbReference type="GO" id="GO:0006275">
    <property type="term" value="P:regulation of DNA replication"/>
    <property type="evidence" value="ECO:0007669"/>
    <property type="project" value="UniProtKB-UniRule"/>
</dbReference>
<dbReference type="CDD" id="cd00009">
    <property type="entry name" value="AAA"/>
    <property type="match status" value="1"/>
</dbReference>
<dbReference type="CDD" id="cd06571">
    <property type="entry name" value="Bac_DnaA_C"/>
    <property type="match status" value="1"/>
</dbReference>
<dbReference type="FunFam" id="1.10.1750.10:FF:000003">
    <property type="entry name" value="Chromosomal replication initiator protein DnaA"/>
    <property type="match status" value="1"/>
</dbReference>
<dbReference type="FunFam" id="1.10.8.60:FF:000003">
    <property type="entry name" value="Chromosomal replication initiator protein DnaA"/>
    <property type="match status" value="1"/>
</dbReference>
<dbReference type="FunFam" id="3.40.50.300:FF:000150">
    <property type="entry name" value="Chromosomal replication initiator protein DnaA"/>
    <property type="match status" value="1"/>
</dbReference>
<dbReference type="Gene3D" id="1.10.1750.10">
    <property type="match status" value="1"/>
</dbReference>
<dbReference type="Gene3D" id="1.10.8.60">
    <property type="match status" value="1"/>
</dbReference>
<dbReference type="Gene3D" id="3.30.300.180">
    <property type="match status" value="1"/>
</dbReference>
<dbReference type="Gene3D" id="3.40.50.300">
    <property type="entry name" value="P-loop containing nucleotide triphosphate hydrolases"/>
    <property type="match status" value="1"/>
</dbReference>
<dbReference type="HAMAP" id="MF_00377">
    <property type="entry name" value="DnaA_bact"/>
    <property type="match status" value="1"/>
</dbReference>
<dbReference type="InterPro" id="IPR003593">
    <property type="entry name" value="AAA+_ATPase"/>
</dbReference>
<dbReference type="InterPro" id="IPR001957">
    <property type="entry name" value="Chromosome_initiator_DnaA"/>
</dbReference>
<dbReference type="InterPro" id="IPR020591">
    <property type="entry name" value="Chromosome_initiator_DnaA-like"/>
</dbReference>
<dbReference type="InterPro" id="IPR018312">
    <property type="entry name" value="Chromosome_initiator_DnaA_CS"/>
</dbReference>
<dbReference type="InterPro" id="IPR013159">
    <property type="entry name" value="DnaA_C"/>
</dbReference>
<dbReference type="InterPro" id="IPR013317">
    <property type="entry name" value="DnaA_dom"/>
</dbReference>
<dbReference type="InterPro" id="IPR024633">
    <property type="entry name" value="DnaA_N_dom"/>
</dbReference>
<dbReference type="InterPro" id="IPR038454">
    <property type="entry name" value="DnaA_N_sf"/>
</dbReference>
<dbReference type="InterPro" id="IPR027417">
    <property type="entry name" value="P-loop_NTPase"/>
</dbReference>
<dbReference type="InterPro" id="IPR010921">
    <property type="entry name" value="Trp_repressor/repl_initiator"/>
</dbReference>
<dbReference type="NCBIfam" id="TIGR00362">
    <property type="entry name" value="DnaA"/>
    <property type="match status" value="1"/>
</dbReference>
<dbReference type="NCBIfam" id="NF010686">
    <property type="entry name" value="PRK14086.1"/>
    <property type="match status" value="1"/>
</dbReference>
<dbReference type="PANTHER" id="PTHR30050">
    <property type="entry name" value="CHROMOSOMAL REPLICATION INITIATOR PROTEIN DNAA"/>
    <property type="match status" value="1"/>
</dbReference>
<dbReference type="PANTHER" id="PTHR30050:SF2">
    <property type="entry name" value="CHROMOSOMAL REPLICATION INITIATOR PROTEIN DNAA"/>
    <property type="match status" value="1"/>
</dbReference>
<dbReference type="Pfam" id="PF00308">
    <property type="entry name" value="Bac_DnaA"/>
    <property type="match status" value="1"/>
</dbReference>
<dbReference type="Pfam" id="PF08299">
    <property type="entry name" value="Bac_DnaA_C"/>
    <property type="match status" value="1"/>
</dbReference>
<dbReference type="Pfam" id="PF11638">
    <property type="entry name" value="DnaA_N"/>
    <property type="match status" value="1"/>
</dbReference>
<dbReference type="PRINTS" id="PR00051">
    <property type="entry name" value="DNAA"/>
</dbReference>
<dbReference type="SMART" id="SM00382">
    <property type="entry name" value="AAA"/>
    <property type="match status" value="1"/>
</dbReference>
<dbReference type="SMART" id="SM00760">
    <property type="entry name" value="Bac_DnaA_C"/>
    <property type="match status" value="1"/>
</dbReference>
<dbReference type="SUPFAM" id="SSF52540">
    <property type="entry name" value="P-loop containing nucleoside triphosphate hydrolases"/>
    <property type="match status" value="1"/>
</dbReference>
<dbReference type="SUPFAM" id="SSF48295">
    <property type="entry name" value="TrpR-like"/>
    <property type="match status" value="1"/>
</dbReference>
<dbReference type="PROSITE" id="PS01008">
    <property type="entry name" value="DNAA"/>
    <property type="match status" value="1"/>
</dbReference>
<organism>
    <name type="scientific">Clostridium perfringens (strain SM101 / Type A)</name>
    <dbReference type="NCBI Taxonomy" id="289380"/>
    <lineage>
        <taxon>Bacteria</taxon>
        <taxon>Bacillati</taxon>
        <taxon>Bacillota</taxon>
        <taxon>Clostridia</taxon>
        <taxon>Eubacteriales</taxon>
        <taxon>Clostridiaceae</taxon>
        <taxon>Clostridium</taxon>
    </lineage>
</organism>
<name>DNAA_CLOPS</name>
<evidence type="ECO:0000255" key="1">
    <source>
        <dbReference type="HAMAP-Rule" id="MF_00377"/>
    </source>
</evidence>
<evidence type="ECO:0000256" key="2">
    <source>
        <dbReference type="SAM" id="MobiDB-lite"/>
    </source>
</evidence>
<feature type="chain" id="PRO_1000048637" description="Chromosomal replication initiator protein DnaA">
    <location>
        <begin position="1"/>
        <end position="457"/>
    </location>
</feature>
<feature type="region of interest" description="Domain I, interacts with DnaA modulators" evidence="1">
    <location>
        <begin position="1"/>
        <end position="75"/>
    </location>
</feature>
<feature type="region of interest" description="Domain II" evidence="1">
    <location>
        <begin position="75"/>
        <end position="118"/>
    </location>
</feature>
<feature type="region of interest" description="Disordered" evidence="2">
    <location>
        <begin position="87"/>
        <end position="108"/>
    </location>
</feature>
<feature type="region of interest" description="Domain III, AAA+ region" evidence="1">
    <location>
        <begin position="119"/>
        <end position="335"/>
    </location>
</feature>
<feature type="region of interest" description="Domain IV, binds dsDNA" evidence="1">
    <location>
        <begin position="336"/>
        <end position="457"/>
    </location>
</feature>
<feature type="compositionally biased region" description="Basic and acidic residues" evidence="2">
    <location>
        <begin position="91"/>
        <end position="103"/>
    </location>
</feature>
<feature type="binding site" evidence="1">
    <location>
        <position position="163"/>
    </location>
    <ligand>
        <name>ATP</name>
        <dbReference type="ChEBI" id="CHEBI:30616"/>
    </ligand>
</feature>
<feature type="binding site" evidence="1">
    <location>
        <position position="165"/>
    </location>
    <ligand>
        <name>ATP</name>
        <dbReference type="ChEBI" id="CHEBI:30616"/>
    </ligand>
</feature>
<feature type="binding site" evidence="1">
    <location>
        <position position="166"/>
    </location>
    <ligand>
        <name>ATP</name>
        <dbReference type="ChEBI" id="CHEBI:30616"/>
    </ligand>
</feature>
<feature type="binding site" evidence="1">
    <location>
        <position position="167"/>
    </location>
    <ligand>
        <name>ATP</name>
        <dbReference type="ChEBI" id="CHEBI:30616"/>
    </ligand>
</feature>
<protein>
    <recommendedName>
        <fullName evidence="1">Chromosomal replication initiator protein DnaA</fullName>
    </recommendedName>
</protein>
<comment type="function">
    <text evidence="1">Plays an essential role in the initiation and regulation of chromosomal replication. ATP-DnaA binds to the origin of replication (oriC) to initiate formation of the DNA replication initiation complex once per cell cycle. Binds the DnaA box (a 9 base pair repeat at the origin) and separates the double-stranded (ds)DNA. Forms a right-handed helical filament on oriC DNA; dsDNA binds to the exterior of the filament while single-stranded (ss)DNA is stabiized in the filament's interior. The ATP-DnaA-oriC complex binds and stabilizes one strand of the AT-rich DNA unwinding element (DUE), permitting loading of DNA polymerase. After initiation quickly degrades to an ADP-DnaA complex that is not apt for DNA replication. Binds acidic phospholipids.</text>
</comment>
<comment type="subunit">
    <text evidence="1">Oligomerizes as a right-handed, spiral filament on DNA at oriC.</text>
</comment>
<comment type="subcellular location">
    <subcellularLocation>
        <location evidence="1">Cytoplasm</location>
    </subcellularLocation>
</comment>
<comment type="domain">
    <text evidence="1">Domain I is involved in oligomerization and binding regulators, domain II is flexibile and of varying length in different bacteria, domain III forms the AAA+ region, while domain IV binds dsDNA.</text>
</comment>
<comment type="similarity">
    <text evidence="1">Belongs to the DnaA family.</text>
</comment>
<accession>Q0SWX6</accession>
<proteinExistence type="inferred from homology"/>
<gene>
    <name evidence="1" type="primary">dnaA</name>
    <name type="ordered locus">CPR_0001</name>
</gene>